<comment type="similarity">
    <text evidence="1">Belongs to the bacterial ribosomal protein bL35 family.</text>
</comment>
<gene>
    <name evidence="1" type="primary">rpmI</name>
    <name type="ordered locus">LJ_1640.1</name>
    <name type="ORF">LJ_1640b</name>
</gene>
<protein>
    <recommendedName>
        <fullName evidence="1">Large ribosomal subunit protein bL35</fullName>
    </recommendedName>
    <alternativeName>
        <fullName evidence="3">50S ribosomal protein L35</fullName>
    </alternativeName>
</protein>
<proteinExistence type="inferred from homology"/>
<sequence>MPKQKTHRASAKRFKRTANGGLKRHHAYTGHRFHGKTKKQRRHLRKAAMVSASDLKRIKQMLSQMR</sequence>
<dbReference type="EMBL" id="AE017198">
    <property type="protein sequence ID" value="AAS09413.1"/>
    <property type="molecule type" value="Genomic_DNA"/>
</dbReference>
<dbReference type="RefSeq" id="WP_003646917.1">
    <property type="nucleotide sequence ID" value="NC_005362.1"/>
</dbReference>
<dbReference type="SMR" id="Q74IC5"/>
<dbReference type="GeneID" id="83570838"/>
<dbReference type="KEGG" id="ljo:LJ_1640b"/>
<dbReference type="eggNOG" id="COG0291">
    <property type="taxonomic scope" value="Bacteria"/>
</dbReference>
<dbReference type="HOGENOM" id="CLU_169643_3_1_9"/>
<dbReference type="Proteomes" id="UP000000581">
    <property type="component" value="Chromosome"/>
</dbReference>
<dbReference type="GO" id="GO:0022625">
    <property type="term" value="C:cytosolic large ribosomal subunit"/>
    <property type="evidence" value="ECO:0007669"/>
    <property type="project" value="TreeGrafter"/>
</dbReference>
<dbReference type="GO" id="GO:0003735">
    <property type="term" value="F:structural constituent of ribosome"/>
    <property type="evidence" value="ECO:0007669"/>
    <property type="project" value="InterPro"/>
</dbReference>
<dbReference type="GO" id="GO:0006412">
    <property type="term" value="P:translation"/>
    <property type="evidence" value="ECO:0007669"/>
    <property type="project" value="UniProtKB-UniRule"/>
</dbReference>
<dbReference type="FunFam" id="4.10.410.60:FF:000001">
    <property type="entry name" value="50S ribosomal protein L35"/>
    <property type="match status" value="1"/>
</dbReference>
<dbReference type="Gene3D" id="4.10.410.60">
    <property type="match status" value="1"/>
</dbReference>
<dbReference type="HAMAP" id="MF_00514">
    <property type="entry name" value="Ribosomal_bL35"/>
    <property type="match status" value="1"/>
</dbReference>
<dbReference type="InterPro" id="IPR001706">
    <property type="entry name" value="Ribosomal_bL35"/>
</dbReference>
<dbReference type="InterPro" id="IPR021137">
    <property type="entry name" value="Ribosomal_bL35-like"/>
</dbReference>
<dbReference type="InterPro" id="IPR018265">
    <property type="entry name" value="Ribosomal_bL35_CS"/>
</dbReference>
<dbReference type="InterPro" id="IPR037229">
    <property type="entry name" value="Ribosomal_bL35_sf"/>
</dbReference>
<dbReference type="NCBIfam" id="TIGR00001">
    <property type="entry name" value="rpmI_bact"/>
    <property type="match status" value="1"/>
</dbReference>
<dbReference type="PANTHER" id="PTHR33343">
    <property type="entry name" value="54S RIBOSOMAL PROTEIN BL35M"/>
    <property type="match status" value="1"/>
</dbReference>
<dbReference type="PANTHER" id="PTHR33343:SF1">
    <property type="entry name" value="LARGE RIBOSOMAL SUBUNIT PROTEIN BL35M"/>
    <property type="match status" value="1"/>
</dbReference>
<dbReference type="Pfam" id="PF01632">
    <property type="entry name" value="Ribosomal_L35p"/>
    <property type="match status" value="1"/>
</dbReference>
<dbReference type="PRINTS" id="PR00064">
    <property type="entry name" value="RIBOSOMALL35"/>
</dbReference>
<dbReference type="SUPFAM" id="SSF143034">
    <property type="entry name" value="L35p-like"/>
    <property type="match status" value="1"/>
</dbReference>
<dbReference type="PROSITE" id="PS00936">
    <property type="entry name" value="RIBOSOMAL_L35"/>
    <property type="match status" value="1"/>
</dbReference>
<name>RL35_LACJO</name>
<reference key="1">
    <citation type="journal article" date="2004" name="Proc. Natl. Acad. Sci. U.S.A.">
        <title>The genome sequence of the probiotic intestinal bacterium Lactobacillus johnsonii NCC 533.</title>
        <authorList>
            <person name="Pridmore R.D."/>
            <person name="Berger B."/>
            <person name="Desiere F."/>
            <person name="Vilanova D."/>
            <person name="Barretto C."/>
            <person name="Pittet A.-C."/>
            <person name="Zwahlen M.-C."/>
            <person name="Rouvet M."/>
            <person name="Altermann E."/>
            <person name="Barrangou R."/>
            <person name="Mollet B."/>
            <person name="Mercenier A."/>
            <person name="Klaenhammer T."/>
            <person name="Arigoni F."/>
            <person name="Schell M.A."/>
        </authorList>
    </citation>
    <scope>NUCLEOTIDE SEQUENCE [LARGE SCALE GENOMIC DNA]</scope>
    <source>
        <strain>CNCM I-1225 / La1 / NCC 533</strain>
    </source>
</reference>
<feature type="chain" id="PRO_0000177371" description="Large ribosomal subunit protein bL35">
    <location>
        <begin position="1"/>
        <end position="66"/>
    </location>
</feature>
<feature type="region of interest" description="Disordered" evidence="2">
    <location>
        <begin position="1"/>
        <end position="42"/>
    </location>
</feature>
<evidence type="ECO:0000255" key="1">
    <source>
        <dbReference type="HAMAP-Rule" id="MF_00514"/>
    </source>
</evidence>
<evidence type="ECO:0000256" key="2">
    <source>
        <dbReference type="SAM" id="MobiDB-lite"/>
    </source>
</evidence>
<evidence type="ECO:0000305" key="3"/>
<organism>
    <name type="scientific">Lactobacillus johnsonii (strain CNCM I-12250 / La1 / NCC 533)</name>
    <dbReference type="NCBI Taxonomy" id="257314"/>
    <lineage>
        <taxon>Bacteria</taxon>
        <taxon>Bacillati</taxon>
        <taxon>Bacillota</taxon>
        <taxon>Bacilli</taxon>
        <taxon>Lactobacillales</taxon>
        <taxon>Lactobacillaceae</taxon>
        <taxon>Lactobacillus</taxon>
    </lineage>
</organism>
<accession>Q74IC5</accession>
<keyword id="KW-0687">Ribonucleoprotein</keyword>
<keyword id="KW-0689">Ribosomal protein</keyword>